<proteinExistence type="inferred from homology"/>
<sequence>MNEAVSPGALSTLFTDARTHNGWRETPVSDETLREIYALMKWGPTSANCSPARIVFIRTAEGKERLRPALSSGNLQKTLTAPVTAIVAWDSEFYERLPQLFPHGDARSWFTSSPQLAEETAFRNSSMQAAYLIFACRALGLDTGPMSGFDRQYVDDAFFAGSTLKSNLLINIGYGDSSKLFARLPRLSFEEACGLL</sequence>
<reference key="1">
    <citation type="journal article" date="2006" name="Proc. Natl. Acad. Sci. U.S.A.">
        <title>Identification of genes subject to positive selection in uropathogenic strains of Escherichia coli: a comparative genomics approach.</title>
        <authorList>
            <person name="Chen S.L."/>
            <person name="Hung C.-S."/>
            <person name="Xu J."/>
            <person name="Reigstad C.S."/>
            <person name="Magrini V."/>
            <person name="Sabo A."/>
            <person name="Blasiar D."/>
            <person name="Bieri T."/>
            <person name="Meyer R.R."/>
            <person name="Ozersky P."/>
            <person name="Armstrong J.R."/>
            <person name="Fulton R.S."/>
            <person name="Latreille J.P."/>
            <person name="Spieth J."/>
            <person name="Hooton T.M."/>
            <person name="Mardis E.R."/>
            <person name="Hultgren S.J."/>
            <person name="Gordon J.I."/>
        </authorList>
    </citation>
    <scope>NUCLEOTIDE SEQUENCE [LARGE SCALE GENOMIC DNA]</scope>
    <source>
        <strain>UTI89 / UPEC</strain>
    </source>
</reference>
<comment type="function">
    <text evidence="1">May reduce toxic product malonic semialdehyde to 3-hydroxypropionic acid, which is excreted.</text>
</comment>
<comment type="catalytic activity">
    <reaction evidence="1">
        <text>3-hydroxypropanoate + NADP(+) = 3-oxopropanoate + NADPH + H(+)</text>
        <dbReference type="Rhea" id="RHEA:26438"/>
        <dbReference type="ChEBI" id="CHEBI:15378"/>
        <dbReference type="ChEBI" id="CHEBI:16510"/>
        <dbReference type="ChEBI" id="CHEBI:33190"/>
        <dbReference type="ChEBI" id="CHEBI:57783"/>
        <dbReference type="ChEBI" id="CHEBI:58349"/>
        <dbReference type="EC" id="1.1.1.298"/>
    </reaction>
</comment>
<comment type="cofactor">
    <cofactor evidence="1">
        <name>FMN</name>
        <dbReference type="ChEBI" id="CHEBI:58210"/>
    </cofactor>
</comment>
<comment type="induction">
    <text evidence="1">Up-regulated by the nitrogen regulatory protein C (NtrC also called GlnG) and repressed by RutR.</text>
</comment>
<comment type="similarity">
    <text evidence="1">Belongs to the nitroreductase family. HadB/RutE subfamily.</text>
</comment>
<name>RUTE_ECOUT</name>
<gene>
    <name evidence="1" type="primary">rutE</name>
    <name type="ordered locus">UTI89_C1071</name>
</gene>
<evidence type="ECO:0000255" key="1">
    <source>
        <dbReference type="HAMAP-Rule" id="MF_01204"/>
    </source>
</evidence>
<feature type="chain" id="PRO_1000066139" description="Probable malonic semialdehyde reductase RutE">
    <location>
        <begin position="1"/>
        <end position="196"/>
    </location>
</feature>
<organism>
    <name type="scientific">Escherichia coli (strain UTI89 / UPEC)</name>
    <dbReference type="NCBI Taxonomy" id="364106"/>
    <lineage>
        <taxon>Bacteria</taxon>
        <taxon>Pseudomonadati</taxon>
        <taxon>Pseudomonadota</taxon>
        <taxon>Gammaproteobacteria</taxon>
        <taxon>Enterobacterales</taxon>
        <taxon>Enterobacteriaceae</taxon>
        <taxon>Escherichia</taxon>
    </lineage>
</organism>
<protein>
    <recommendedName>
        <fullName evidence="1">Probable malonic semialdehyde reductase RutE</fullName>
        <ecNumber evidence="1">1.1.1.298</ecNumber>
    </recommendedName>
</protein>
<dbReference type="EC" id="1.1.1.298" evidence="1"/>
<dbReference type="EMBL" id="CP000243">
    <property type="protein sequence ID" value="ABE06555.1"/>
    <property type="molecule type" value="Genomic_DNA"/>
</dbReference>
<dbReference type="RefSeq" id="WP_001001168.1">
    <property type="nucleotide sequence ID" value="NZ_CP064825.1"/>
</dbReference>
<dbReference type="SMR" id="Q1RDK9"/>
<dbReference type="KEGG" id="eci:UTI89_C1071"/>
<dbReference type="HOGENOM" id="CLU_084441_0_0_6"/>
<dbReference type="Proteomes" id="UP000001952">
    <property type="component" value="Chromosome"/>
</dbReference>
<dbReference type="GO" id="GO:0035527">
    <property type="term" value="F:3-hydroxypropionate dehydrogenase (NADP+) activity"/>
    <property type="evidence" value="ECO:0007669"/>
    <property type="project" value="UniProtKB-UniRule"/>
</dbReference>
<dbReference type="GO" id="GO:0019740">
    <property type="term" value="P:nitrogen utilization"/>
    <property type="evidence" value="ECO:0007669"/>
    <property type="project" value="UniProtKB-UniRule"/>
</dbReference>
<dbReference type="GO" id="GO:0006212">
    <property type="term" value="P:uracil catabolic process"/>
    <property type="evidence" value="ECO:0007669"/>
    <property type="project" value="UniProtKB-UniRule"/>
</dbReference>
<dbReference type="CDD" id="cd02148">
    <property type="entry name" value="RutE-like"/>
    <property type="match status" value="1"/>
</dbReference>
<dbReference type="FunFam" id="3.40.109.10:FF:000003">
    <property type="entry name" value="Probable malonic semialdehyde reductase RutE"/>
    <property type="match status" value="1"/>
</dbReference>
<dbReference type="Gene3D" id="3.40.109.10">
    <property type="entry name" value="NADH Oxidase"/>
    <property type="match status" value="1"/>
</dbReference>
<dbReference type="HAMAP" id="MF_01204">
    <property type="entry name" value="Oxidoreductase_RutE_HadB"/>
    <property type="match status" value="1"/>
</dbReference>
<dbReference type="InterPro" id="IPR029479">
    <property type="entry name" value="Nitroreductase"/>
</dbReference>
<dbReference type="InterPro" id="IPR000415">
    <property type="entry name" value="Nitroreductase-like"/>
</dbReference>
<dbReference type="InterPro" id="IPR050461">
    <property type="entry name" value="Nitroreductase_HadB/RutE"/>
</dbReference>
<dbReference type="InterPro" id="IPR023936">
    <property type="entry name" value="RutE-like"/>
</dbReference>
<dbReference type="NCBIfam" id="NF003768">
    <property type="entry name" value="PRK05365.1"/>
    <property type="match status" value="1"/>
</dbReference>
<dbReference type="PANTHER" id="PTHR43543">
    <property type="entry name" value="MALONIC SEMIALDEHYDE REDUCTASE RUTE-RELATED"/>
    <property type="match status" value="1"/>
</dbReference>
<dbReference type="PANTHER" id="PTHR43543:SF1">
    <property type="entry name" value="MALONIC SEMIALDEHYDE REDUCTASE RUTE-RELATED"/>
    <property type="match status" value="1"/>
</dbReference>
<dbReference type="Pfam" id="PF00881">
    <property type="entry name" value="Nitroreductase"/>
    <property type="match status" value="1"/>
</dbReference>
<dbReference type="SUPFAM" id="SSF55469">
    <property type="entry name" value="FMN-dependent nitroreductase-like"/>
    <property type="match status" value="1"/>
</dbReference>
<keyword id="KW-0285">Flavoprotein</keyword>
<keyword id="KW-0288">FMN</keyword>
<keyword id="KW-0520">NAD</keyword>
<keyword id="KW-0521">NADP</keyword>
<keyword id="KW-0560">Oxidoreductase</keyword>
<accession>Q1RDK9</accession>